<dbReference type="EMBL" id="CP000924">
    <property type="protein sequence ID" value="ABY94916.1"/>
    <property type="molecule type" value="Genomic_DNA"/>
</dbReference>
<dbReference type="RefSeq" id="WP_003869176.1">
    <property type="nucleotide sequence ID" value="NC_010321.1"/>
</dbReference>
<dbReference type="SMR" id="B0K9V3"/>
<dbReference type="STRING" id="340099.Teth39_1262"/>
<dbReference type="KEGG" id="tpd:Teth39_1262"/>
<dbReference type="eggNOG" id="COG1220">
    <property type="taxonomic scope" value="Bacteria"/>
</dbReference>
<dbReference type="HOGENOM" id="CLU_033123_0_0_9"/>
<dbReference type="Proteomes" id="UP000002156">
    <property type="component" value="Chromosome"/>
</dbReference>
<dbReference type="GO" id="GO:0009376">
    <property type="term" value="C:HslUV protease complex"/>
    <property type="evidence" value="ECO:0007669"/>
    <property type="project" value="UniProtKB-UniRule"/>
</dbReference>
<dbReference type="GO" id="GO:0005524">
    <property type="term" value="F:ATP binding"/>
    <property type="evidence" value="ECO:0007669"/>
    <property type="project" value="UniProtKB-UniRule"/>
</dbReference>
<dbReference type="GO" id="GO:0016887">
    <property type="term" value="F:ATP hydrolysis activity"/>
    <property type="evidence" value="ECO:0007669"/>
    <property type="project" value="InterPro"/>
</dbReference>
<dbReference type="GO" id="GO:0008233">
    <property type="term" value="F:peptidase activity"/>
    <property type="evidence" value="ECO:0007669"/>
    <property type="project" value="InterPro"/>
</dbReference>
<dbReference type="GO" id="GO:0036402">
    <property type="term" value="F:proteasome-activating activity"/>
    <property type="evidence" value="ECO:0007669"/>
    <property type="project" value="UniProtKB-UniRule"/>
</dbReference>
<dbReference type="GO" id="GO:0043335">
    <property type="term" value="P:protein unfolding"/>
    <property type="evidence" value="ECO:0007669"/>
    <property type="project" value="UniProtKB-UniRule"/>
</dbReference>
<dbReference type="GO" id="GO:0051603">
    <property type="term" value="P:proteolysis involved in protein catabolic process"/>
    <property type="evidence" value="ECO:0007669"/>
    <property type="project" value="TreeGrafter"/>
</dbReference>
<dbReference type="CDD" id="cd19498">
    <property type="entry name" value="RecA-like_HslU"/>
    <property type="match status" value="1"/>
</dbReference>
<dbReference type="FunFam" id="3.40.50.300:FF:000213">
    <property type="entry name" value="ATP-dependent protease ATPase subunit HslU"/>
    <property type="match status" value="1"/>
</dbReference>
<dbReference type="FunFam" id="3.40.50.300:FF:000220">
    <property type="entry name" value="ATP-dependent protease ATPase subunit HslU"/>
    <property type="match status" value="1"/>
</dbReference>
<dbReference type="Gene3D" id="1.10.8.60">
    <property type="match status" value="1"/>
</dbReference>
<dbReference type="Gene3D" id="1.10.8.10">
    <property type="entry name" value="DNA helicase RuvA subunit, C-terminal domain"/>
    <property type="match status" value="1"/>
</dbReference>
<dbReference type="Gene3D" id="3.40.50.300">
    <property type="entry name" value="P-loop containing nucleotide triphosphate hydrolases"/>
    <property type="match status" value="2"/>
</dbReference>
<dbReference type="HAMAP" id="MF_00249">
    <property type="entry name" value="HslU"/>
    <property type="match status" value="1"/>
</dbReference>
<dbReference type="InterPro" id="IPR003593">
    <property type="entry name" value="AAA+_ATPase"/>
</dbReference>
<dbReference type="InterPro" id="IPR050052">
    <property type="entry name" value="ATP-dep_Clp_protease_ClpX"/>
</dbReference>
<dbReference type="InterPro" id="IPR003959">
    <property type="entry name" value="ATPase_AAA_core"/>
</dbReference>
<dbReference type="InterPro" id="IPR019489">
    <property type="entry name" value="Clp_ATPase_C"/>
</dbReference>
<dbReference type="InterPro" id="IPR004491">
    <property type="entry name" value="HslU"/>
</dbReference>
<dbReference type="InterPro" id="IPR027417">
    <property type="entry name" value="P-loop_NTPase"/>
</dbReference>
<dbReference type="NCBIfam" id="TIGR00390">
    <property type="entry name" value="hslU"/>
    <property type="match status" value="1"/>
</dbReference>
<dbReference type="NCBIfam" id="NF003544">
    <property type="entry name" value="PRK05201.1"/>
    <property type="match status" value="1"/>
</dbReference>
<dbReference type="PANTHER" id="PTHR48102">
    <property type="entry name" value="ATP-DEPENDENT CLP PROTEASE ATP-BINDING SUBUNIT CLPX-LIKE, MITOCHONDRIAL-RELATED"/>
    <property type="match status" value="1"/>
</dbReference>
<dbReference type="PANTHER" id="PTHR48102:SF3">
    <property type="entry name" value="ATP-DEPENDENT PROTEASE ATPASE SUBUNIT HSLU"/>
    <property type="match status" value="1"/>
</dbReference>
<dbReference type="Pfam" id="PF00004">
    <property type="entry name" value="AAA"/>
    <property type="match status" value="1"/>
</dbReference>
<dbReference type="Pfam" id="PF07724">
    <property type="entry name" value="AAA_2"/>
    <property type="match status" value="1"/>
</dbReference>
<dbReference type="Pfam" id="PF10431">
    <property type="entry name" value="ClpB_D2-small"/>
    <property type="match status" value="1"/>
</dbReference>
<dbReference type="SMART" id="SM00382">
    <property type="entry name" value="AAA"/>
    <property type="match status" value="1"/>
</dbReference>
<dbReference type="SMART" id="SM01086">
    <property type="entry name" value="ClpB_D2-small"/>
    <property type="match status" value="1"/>
</dbReference>
<dbReference type="SUPFAM" id="SSF52540">
    <property type="entry name" value="P-loop containing nucleoside triphosphate hydrolases"/>
    <property type="match status" value="1"/>
</dbReference>
<feature type="chain" id="PRO_1000204531" description="ATP-dependent protease ATPase subunit HslU">
    <location>
        <begin position="1"/>
        <end position="459"/>
    </location>
</feature>
<feature type="binding site" evidence="1">
    <location>
        <position position="18"/>
    </location>
    <ligand>
        <name>ATP</name>
        <dbReference type="ChEBI" id="CHEBI:30616"/>
    </ligand>
</feature>
<feature type="binding site" evidence="1">
    <location>
        <begin position="60"/>
        <end position="65"/>
    </location>
    <ligand>
        <name>ATP</name>
        <dbReference type="ChEBI" id="CHEBI:30616"/>
    </ligand>
</feature>
<feature type="binding site" evidence="1">
    <location>
        <position position="272"/>
    </location>
    <ligand>
        <name>ATP</name>
        <dbReference type="ChEBI" id="CHEBI:30616"/>
    </ligand>
</feature>
<feature type="binding site" evidence="1">
    <location>
        <position position="337"/>
    </location>
    <ligand>
        <name>ATP</name>
        <dbReference type="ChEBI" id="CHEBI:30616"/>
    </ligand>
</feature>
<feature type="binding site" evidence="1">
    <location>
        <position position="409"/>
    </location>
    <ligand>
        <name>ATP</name>
        <dbReference type="ChEBI" id="CHEBI:30616"/>
    </ligand>
</feature>
<accession>B0K9V3</accession>
<proteinExistence type="inferred from homology"/>
<sequence>MKNYTPKEIVEELDKYIVGQKEAKKSVAVALRNRYRRNLLPDDFKEEVTPKNIIMVGPTGVGKTEIARRIAKLVEAPFVKVEATKFTEVGYVGRDVDSMVRDLVEAAVRMVKEEKLKKVTEKAKKIAEDRLIDYIIGKRKKQTKNPFEVLFNYPSAEKSEETEEESMQYKREEIRQKLRNGELDNYVVEIEVTDTSTPMLEMYTNLGSEEMNINLQDIFADILPKKKKIKKVPVYEAKRILESEEAQNLIDMDEVIEEAIKRAENDGIIFIDEIDKIASSGYTAGPDVSREGVQRDILPIIEGCTVMTKYGPVKTDHILFIAAGAFNVAKVSDLIPELQGRFPVRVNLKPLTKEDFIRILKEPKNALTKQYQELLRTEGIEVKYTDEAIEAIAEVAYLINQQSEDIGARRLHTVMEKLFEELSFNAPELGGQQIVITEEYVKEQLKDSLNKYEVSKYIL</sequence>
<evidence type="ECO:0000255" key="1">
    <source>
        <dbReference type="HAMAP-Rule" id="MF_00249"/>
    </source>
</evidence>
<organism>
    <name type="scientific">Thermoanaerobacter pseudethanolicus (strain ATCC 33223 / 39E)</name>
    <name type="common">Clostridium thermohydrosulfuricum</name>
    <dbReference type="NCBI Taxonomy" id="340099"/>
    <lineage>
        <taxon>Bacteria</taxon>
        <taxon>Bacillati</taxon>
        <taxon>Bacillota</taxon>
        <taxon>Clostridia</taxon>
        <taxon>Thermoanaerobacterales</taxon>
        <taxon>Thermoanaerobacteraceae</taxon>
        <taxon>Thermoanaerobacter</taxon>
    </lineage>
</organism>
<reference key="1">
    <citation type="submission" date="2008-01" db="EMBL/GenBank/DDBJ databases">
        <title>Complete sequence of Thermoanaerobacter pseudethanolicus 39E.</title>
        <authorList>
            <person name="Copeland A."/>
            <person name="Lucas S."/>
            <person name="Lapidus A."/>
            <person name="Barry K."/>
            <person name="Glavina del Rio T."/>
            <person name="Dalin E."/>
            <person name="Tice H."/>
            <person name="Pitluck S."/>
            <person name="Bruce D."/>
            <person name="Goodwin L."/>
            <person name="Saunders E."/>
            <person name="Brettin T."/>
            <person name="Detter J.C."/>
            <person name="Han C."/>
            <person name="Schmutz J."/>
            <person name="Larimer F."/>
            <person name="Land M."/>
            <person name="Hauser L."/>
            <person name="Kyrpides N."/>
            <person name="Lykidis A."/>
            <person name="Hemme C."/>
            <person name="Fields M.W."/>
            <person name="He Z."/>
            <person name="Zhou J."/>
            <person name="Richardson P."/>
        </authorList>
    </citation>
    <scope>NUCLEOTIDE SEQUENCE [LARGE SCALE GENOMIC DNA]</scope>
    <source>
        <strain>ATCC 33223 / DSM 2355 / 39E</strain>
    </source>
</reference>
<comment type="function">
    <text evidence="1">ATPase subunit of a proteasome-like degradation complex; this subunit has chaperone activity. The binding of ATP and its subsequent hydrolysis by HslU are essential for unfolding of protein substrates subsequently hydrolyzed by HslV. HslU recognizes the N-terminal part of its protein substrates and unfolds these before they are guided to HslV for hydrolysis.</text>
</comment>
<comment type="subunit">
    <text evidence="1">A double ring-shaped homohexamer of HslV is capped on each side by a ring-shaped HslU homohexamer. The assembly of the HslU/HslV complex is dependent on binding of ATP.</text>
</comment>
<comment type="subcellular location">
    <subcellularLocation>
        <location evidence="1">Cytoplasm</location>
    </subcellularLocation>
</comment>
<comment type="similarity">
    <text evidence="1">Belongs to the ClpX chaperone family. HslU subfamily.</text>
</comment>
<name>HSLU_THEP3</name>
<gene>
    <name evidence="1" type="primary">hslU</name>
    <name type="ordered locus">Teth39_1262</name>
</gene>
<keyword id="KW-0067">ATP-binding</keyword>
<keyword id="KW-0143">Chaperone</keyword>
<keyword id="KW-0963">Cytoplasm</keyword>
<keyword id="KW-0547">Nucleotide-binding</keyword>
<keyword id="KW-1185">Reference proteome</keyword>
<keyword id="KW-0346">Stress response</keyword>
<protein>
    <recommendedName>
        <fullName evidence="1">ATP-dependent protease ATPase subunit HslU</fullName>
    </recommendedName>
    <alternativeName>
        <fullName evidence="1">Unfoldase HslU</fullName>
    </alternativeName>
</protein>